<feature type="chain" id="PRO_1000193794" description="Large ribosomal subunit protein bL19">
    <location>
        <begin position="1"/>
        <end position="148"/>
    </location>
</feature>
<dbReference type="EMBL" id="CP001016">
    <property type="protein sequence ID" value="ACB95727.1"/>
    <property type="molecule type" value="Genomic_DNA"/>
</dbReference>
<dbReference type="RefSeq" id="WP_012385083.1">
    <property type="nucleotide sequence ID" value="NC_010581.1"/>
</dbReference>
<dbReference type="SMR" id="B2IFY8"/>
<dbReference type="STRING" id="395963.Bind_2107"/>
<dbReference type="KEGG" id="bid:Bind_2107"/>
<dbReference type="eggNOG" id="COG0335">
    <property type="taxonomic scope" value="Bacteria"/>
</dbReference>
<dbReference type="HOGENOM" id="CLU_103507_0_2_5"/>
<dbReference type="OrthoDB" id="9803541at2"/>
<dbReference type="Proteomes" id="UP000001695">
    <property type="component" value="Chromosome"/>
</dbReference>
<dbReference type="GO" id="GO:0022625">
    <property type="term" value="C:cytosolic large ribosomal subunit"/>
    <property type="evidence" value="ECO:0007669"/>
    <property type="project" value="TreeGrafter"/>
</dbReference>
<dbReference type="GO" id="GO:0003735">
    <property type="term" value="F:structural constituent of ribosome"/>
    <property type="evidence" value="ECO:0007669"/>
    <property type="project" value="InterPro"/>
</dbReference>
<dbReference type="GO" id="GO:0006412">
    <property type="term" value="P:translation"/>
    <property type="evidence" value="ECO:0007669"/>
    <property type="project" value="UniProtKB-UniRule"/>
</dbReference>
<dbReference type="FunFam" id="2.30.30.790:FF:000001">
    <property type="entry name" value="50S ribosomal protein L19"/>
    <property type="match status" value="1"/>
</dbReference>
<dbReference type="Gene3D" id="2.30.30.790">
    <property type="match status" value="1"/>
</dbReference>
<dbReference type="HAMAP" id="MF_00402">
    <property type="entry name" value="Ribosomal_bL19"/>
    <property type="match status" value="1"/>
</dbReference>
<dbReference type="InterPro" id="IPR001857">
    <property type="entry name" value="Ribosomal_bL19"/>
</dbReference>
<dbReference type="InterPro" id="IPR018257">
    <property type="entry name" value="Ribosomal_bL19_CS"/>
</dbReference>
<dbReference type="InterPro" id="IPR038657">
    <property type="entry name" value="Ribosomal_bL19_sf"/>
</dbReference>
<dbReference type="InterPro" id="IPR008991">
    <property type="entry name" value="Translation_prot_SH3-like_sf"/>
</dbReference>
<dbReference type="NCBIfam" id="TIGR01024">
    <property type="entry name" value="rplS_bact"/>
    <property type="match status" value="1"/>
</dbReference>
<dbReference type="PANTHER" id="PTHR15680:SF9">
    <property type="entry name" value="LARGE RIBOSOMAL SUBUNIT PROTEIN BL19M"/>
    <property type="match status" value="1"/>
</dbReference>
<dbReference type="PANTHER" id="PTHR15680">
    <property type="entry name" value="RIBOSOMAL PROTEIN L19"/>
    <property type="match status" value="1"/>
</dbReference>
<dbReference type="Pfam" id="PF01245">
    <property type="entry name" value="Ribosomal_L19"/>
    <property type="match status" value="1"/>
</dbReference>
<dbReference type="PIRSF" id="PIRSF002191">
    <property type="entry name" value="Ribosomal_L19"/>
    <property type="match status" value="1"/>
</dbReference>
<dbReference type="PRINTS" id="PR00061">
    <property type="entry name" value="RIBOSOMALL19"/>
</dbReference>
<dbReference type="SUPFAM" id="SSF50104">
    <property type="entry name" value="Translation proteins SH3-like domain"/>
    <property type="match status" value="1"/>
</dbReference>
<dbReference type="PROSITE" id="PS01015">
    <property type="entry name" value="RIBOSOMAL_L19"/>
    <property type="match status" value="1"/>
</dbReference>
<reference key="1">
    <citation type="journal article" date="2010" name="J. Bacteriol.">
        <title>Complete genome sequence of Beijerinckia indica subsp. indica.</title>
        <authorList>
            <person name="Tamas I."/>
            <person name="Dedysh S.N."/>
            <person name="Liesack W."/>
            <person name="Stott M.B."/>
            <person name="Alam M."/>
            <person name="Murrell J.C."/>
            <person name="Dunfield P.F."/>
        </authorList>
    </citation>
    <scope>NUCLEOTIDE SEQUENCE [LARGE SCALE GENOMIC DNA]</scope>
    <source>
        <strain>ATCC 9039 / DSM 1715 / NCIMB 8712</strain>
    </source>
</reference>
<proteinExistence type="inferred from homology"/>
<protein>
    <recommendedName>
        <fullName evidence="1">Large ribosomal subunit protein bL19</fullName>
    </recommendedName>
    <alternativeName>
        <fullName evidence="2">50S ribosomal protein L19</fullName>
    </alternativeName>
</protein>
<comment type="function">
    <text evidence="1">This protein is located at the 30S-50S ribosomal subunit interface and may play a role in the structure and function of the aminoacyl-tRNA binding site.</text>
</comment>
<comment type="similarity">
    <text evidence="1">Belongs to the bacterial ribosomal protein bL19 family.</text>
</comment>
<organism>
    <name type="scientific">Beijerinckia indica subsp. indica (strain ATCC 9039 / DSM 1715 / NCIMB 8712)</name>
    <dbReference type="NCBI Taxonomy" id="395963"/>
    <lineage>
        <taxon>Bacteria</taxon>
        <taxon>Pseudomonadati</taxon>
        <taxon>Pseudomonadota</taxon>
        <taxon>Alphaproteobacteria</taxon>
        <taxon>Hyphomicrobiales</taxon>
        <taxon>Beijerinckiaceae</taxon>
        <taxon>Beijerinckia</taxon>
    </lineage>
</organism>
<accession>B2IFY8</accession>
<gene>
    <name evidence="1" type="primary">rplS</name>
    <name type="ordered locus">Bind_2107</name>
</gene>
<evidence type="ECO:0000255" key="1">
    <source>
        <dbReference type="HAMAP-Rule" id="MF_00402"/>
    </source>
</evidence>
<evidence type="ECO:0000305" key="2"/>
<sequence>MNIIETLEAEQAAKLLAKRPIPAFQPGDTVIVNVKVKEGERTRVQAYEGVCIARNGGGLNESFTVRKISYGEGVERVFPIYSPNIDSIKVVRRGKVRRAKLYYLRDRRGKAARIAEKMETPAAKAAREAAKKEAKAAAKAKKAASAAE</sequence>
<name>RL19_BEII9</name>
<keyword id="KW-1185">Reference proteome</keyword>
<keyword id="KW-0687">Ribonucleoprotein</keyword>
<keyword id="KW-0689">Ribosomal protein</keyword>